<sequence length="407" mass="45022">MDIILGVVMFTLIVLALVLVILFAKSKLVPTGDITISINGDADKSIVTNPGGKLLSVLAGSGVFVSSACGGGGSCGQCRVKVKSGGGDILPTELDHITKGEAREGERLACQVAVKTDMDIELPEEIFGVKKWECTVISNDNKATFIKELKLQIPDGESVPFRAGGYIQIEAPAHHIKYSDFDVPEEYRGDWDKFNLFRYESKVDEDIIRAYSMANYPEEFGIIMLNVRIATPPPNNPNVPPGQMSSYIWSLKEGDKCTISGPFGEFFAKDTDAEMVFIGGGAGMAPMRSHIFDQLKRLKSTRKMSYWYGARSKREMFYVEDFDGLAAENSNFVWHCALSDPMPEDNWDGYTGFIHNVLYENYLKDHEAPEDCEYYMCGPPMMNAAVIGMLKNLGVEDENILLDDFGG</sequence>
<keyword id="KW-0001">2Fe-2S</keyword>
<keyword id="KW-0997">Cell inner membrane</keyword>
<keyword id="KW-1003">Cell membrane</keyword>
<keyword id="KW-0274">FAD</keyword>
<keyword id="KW-0285">Flavoprotein</keyword>
<keyword id="KW-0406">Ion transport</keyword>
<keyword id="KW-0408">Iron</keyword>
<keyword id="KW-0411">Iron-sulfur</keyword>
<keyword id="KW-0472">Membrane</keyword>
<keyword id="KW-0479">Metal-binding</keyword>
<keyword id="KW-0520">NAD</keyword>
<keyword id="KW-0915">Sodium</keyword>
<keyword id="KW-0739">Sodium transport</keyword>
<keyword id="KW-1278">Translocase</keyword>
<keyword id="KW-0812">Transmembrane</keyword>
<keyword id="KW-1133">Transmembrane helix</keyword>
<keyword id="KW-0813">Transport</keyword>
<keyword id="KW-0830">Ubiquinone</keyword>
<accession>Q75R59</accession>
<proteinExistence type="inferred from homology"/>
<reference key="1">
    <citation type="submission" date="2004-01" db="EMBL/GenBank/DDBJ databases">
        <title>Cloning, sequencing and transcriptional regulation of Na+-dependent NADH:quinone oxidoreductase gene of Vibrio anguillarum, a fish pathogen.</title>
        <authorList>
            <person name="Fujiwara-Nagata E."/>
            <person name="Eguchi Y."/>
            <person name="Utsumi R."/>
            <person name="Eguchi M."/>
        </authorList>
    </citation>
    <scope>NUCLEOTIDE SEQUENCE [GENOMIC DNA]</scope>
</reference>
<name>NQRF_VIBAN</name>
<protein>
    <recommendedName>
        <fullName evidence="1">Na(+)-translocating NADH-quinone reductase subunit F</fullName>
        <shortName evidence="1">Na(+)-NQR subunit F</shortName>
        <shortName evidence="1">Na(+)-translocating NQR subunit F</shortName>
        <ecNumber evidence="1">7.2.1.1</ecNumber>
    </recommendedName>
    <alternativeName>
        <fullName evidence="1">NQR complex subunit F</fullName>
    </alternativeName>
    <alternativeName>
        <fullName evidence="1">NQR-1 subunit F</fullName>
    </alternativeName>
</protein>
<gene>
    <name evidence="1" type="primary">nqrF</name>
</gene>
<dbReference type="EC" id="7.2.1.1" evidence="1"/>
<dbReference type="EMBL" id="AB159077">
    <property type="protein sequence ID" value="BAD14953.1"/>
    <property type="molecule type" value="Genomic_DNA"/>
</dbReference>
<dbReference type="RefSeq" id="WP_013856176.1">
    <property type="nucleotide sequence ID" value="NZ_VTYO01000002.1"/>
</dbReference>
<dbReference type="SMR" id="Q75R59"/>
<dbReference type="STRING" id="55601.AA407_03540"/>
<dbReference type="GeneID" id="83859565"/>
<dbReference type="OMA" id="YWYGGRS"/>
<dbReference type="OrthoDB" id="9806195at2"/>
<dbReference type="GO" id="GO:0005886">
    <property type="term" value="C:plasma membrane"/>
    <property type="evidence" value="ECO:0007669"/>
    <property type="project" value="UniProtKB-SubCell"/>
</dbReference>
<dbReference type="GO" id="GO:0051537">
    <property type="term" value="F:2 iron, 2 sulfur cluster binding"/>
    <property type="evidence" value="ECO:0007669"/>
    <property type="project" value="UniProtKB-KW"/>
</dbReference>
<dbReference type="GO" id="GO:0009055">
    <property type="term" value="F:electron transfer activity"/>
    <property type="evidence" value="ECO:0007669"/>
    <property type="project" value="UniProtKB-UniRule"/>
</dbReference>
<dbReference type="GO" id="GO:0046872">
    <property type="term" value="F:metal ion binding"/>
    <property type="evidence" value="ECO:0007669"/>
    <property type="project" value="UniProtKB-KW"/>
</dbReference>
<dbReference type="GO" id="GO:0016655">
    <property type="term" value="F:oxidoreductase activity, acting on NAD(P)H, quinone or similar compound as acceptor"/>
    <property type="evidence" value="ECO:0007669"/>
    <property type="project" value="InterPro"/>
</dbReference>
<dbReference type="GO" id="GO:0006814">
    <property type="term" value="P:sodium ion transport"/>
    <property type="evidence" value="ECO:0007669"/>
    <property type="project" value="UniProtKB-UniRule"/>
</dbReference>
<dbReference type="CDD" id="cd00207">
    <property type="entry name" value="fer2"/>
    <property type="match status" value="1"/>
</dbReference>
<dbReference type="CDD" id="cd06188">
    <property type="entry name" value="NADH_quinone_reductase"/>
    <property type="match status" value="1"/>
</dbReference>
<dbReference type="FunFam" id="2.40.30.10:FF:000064">
    <property type="entry name" value="Na(+)-translocating NADH-quinone reductase subunit F"/>
    <property type="match status" value="1"/>
</dbReference>
<dbReference type="FunFam" id="3.10.20.30:FF:000024">
    <property type="entry name" value="Na(+)-translocating NADH-quinone reductase subunit F"/>
    <property type="match status" value="1"/>
</dbReference>
<dbReference type="FunFam" id="3.40.50.80:FF:000014">
    <property type="entry name" value="Na(+)-translocating NADH-quinone reductase subunit F"/>
    <property type="match status" value="1"/>
</dbReference>
<dbReference type="Gene3D" id="3.10.20.30">
    <property type="match status" value="1"/>
</dbReference>
<dbReference type="Gene3D" id="3.40.50.80">
    <property type="entry name" value="Nucleotide-binding domain of ferredoxin-NADP reductase (FNR) module"/>
    <property type="match status" value="1"/>
</dbReference>
<dbReference type="Gene3D" id="2.40.30.10">
    <property type="entry name" value="Translation factors"/>
    <property type="match status" value="1"/>
</dbReference>
<dbReference type="HAMAP" id="MF_00430">
    <property type="entry name" value="NqrF"/>
    <property type="match status" value="1"/>
</dbReference>
<dbReference type="InterPro" id="IPR036010">
    <property type="entry name" value="2Fe-2S_ferredoxin-like_sf"/>
</dbReference>
<dbReference type="InterPro" id="IPR001041">
    <property type="entry name" value="2Fe-2S_ferredoxin-type"/>
</dbReference>
<dbReference type="InterPro" id="IPR012675">
    <property type="entry name" value="Beta-grasp_dom_sf"/>
</dbReference>
<dbReference type="InterPro" id="IPR008333">
    <property type="entry name" value="Cbr1-like_FAD-bd_dom"/>
</dbReference>
<dbReference type="InterPro" id="IPR017927">
    <property type="entry name" value="FAD-bd_FR_type"/>
</dbReference>
<dbReference type="InterPro" id="IPR039261">
    <property type="entry name" value="FNR_nucleotide-bd"/>
</dbReference>
<dbReference type="InterPro" id="IPR010205">
    <property type="entry name" value="NqrF"/>
</dbReference>
<dbReference type="InterPro" id="IPR001433">
    <property type="entry name" value="OxRdtase_FAD/NAD-bd"/>
</dbReference>
<dbReference type="InterPro" id="IPR017938">
    <property type="entry name" value="Riboflavin_synthase-like_b-brl"/>
</dbReference>
<dbReference type="NCBIfam" id="TIGR01941">
    <property type="entry name" value="nqrF"/>
    <property type="match status" value="1"/>
</dbReference>
<dbReference type="PANTHER" id="PTHR43644">
    <property type="entry name" value="NA(+)-TRANSLOCATING NADH-QUINONE REDUCTASE SUBUNIT"/>
    <property type="match status" value="1"/>
</dbReference>
<dbReference type="PANTHER" id="PTHR43644:SF1">
    <property type="entry name" value="NAD(P)H-FLAVIN REDUCTASE"/>
    <property type="match status" value="1"/>
</dbReference>
<dbReference type="Pfam" id="PF00970">
    <property type="entry name" value="FAD_binding_6"/>
    <property type="match status" value="1"/>
</dbReference>
<dbReference type="Pfam" id="PF00111">
    <property type="entry name" value="Fer2"/>
    <property type="match status" value="1"/>
</dbReference>
<dbReference type="Pfam" id="PF00175">
    <property type="entry name" value="NAD_binding_1"/>
    <property type="match status" value="1"/>
</dbReference>
<dbReference type="PIRSF" id="PIRSF000044">
    <property type="entry name" value="Cis_Diol_DH_RD"/>
    <property type="match status" value="1"/>
</dbReference>
<dbReference type="SUPFAM" id="SSF54292">
    <property type="entry name" value="2Fe-2S ferredoxin-like"/>
    <property type="match status" value="1"/>
</dbReference>
<dbReference type="SUPFAM" id="SSF52343">
    <property type="entry name" value="Ferredoxin reductase-like, C-terminal NADP-linked domain"/>
    <property type="match status" value="1"/>
</dbReference>
<dbReference type="SUPFAM" id="SSF63380">
    <property type="entry name" value="Riboflavin synthase domain-like"/>
    <property type="match status" value="1"/>
</dbReference>
<dbReference type="PROSITE" id="PS51085">
    <property type="entry name" value="2FE2S_FER_2"/>
    <property type="match status" value="1"/>
</dbReference>
<dbReference type="PROSITE" id="PS51384">
    <property type="entry name" value="FAD_FR"/>
    <property type="match status" value="1"/>
</dbReference>
<feature type="chain" id="PRO_0000074505" description="Na(+)-translocating NADH-quinone reductase subunit F">
    <location>
        <begin position="1"/>
        <end position="407"/>
    </location>
</feature>
<feature type="transmembrane region" description="Helical" evidence="1">
    <location>
        <begin position="3"/>
        <end position="23"/>
    </location>
</feature>
<feature type="domain" description="2Fe-2S ferredoxin-type" evidence="1">
    <location>
        <begin position="32"/>
        <end position="126"/>
    </location>
</feature>
<feature type="domain" description="FAD-binding FR-type" evidence="1">
    <location>
        <begin position="129"/>
        <end position="269"/>
    </location>
</feature>
<feature type="region of interest" description="Catalytic">
    <location>
        <begin position="272"/>
        <end position="389"/>
    </location>
</feature>
<feature type="binding site" evidence="1">
    <location>
        <position position="69"/>
    </location>
    <ligand>
        <name>[2Fe-2S] cluster</name>
        <dbReference type="ChEBI" id="CHEBI:190135"/>
    </ligand>
</feature>
<feature type="binding site" evidence="1">
    <location>
        <position position="75"/>
    </location>
    <ligand>
        <name>[2Fe-2S] cluster</name>
        <dbReference type="ChEBI" id="CHEBI:190135"/>
    </ligand>
</feature>
<feature type="binding site" evidence="1">
    <location>
        <position position="78"/>
    </location>
    <ligand>
        <name>[2Fe-2S] cluster</name>
        <dbReference type="ChEBI" id="CHEBI:190135"/>
    </ligand>
</feature>
<feature type="binding site" evidence="1">
    <location>
        <position position="110"/>
    </location>
    <ligand>
        <name>[2Fe-2S] cluster</name>
        <dbReference type="ChEBI" id="CHEBI:190135"/>
    </ligand>
</feature>
<organism>
    <name type="scientific">Vibrio anguillarum</name>
    <name type="common">Listonella anguillarum</name>
    <dbReference type="NCBI Taxonomy" id="55601"/>
    <lineage>
        <taxon>Bacteria</taxon>
        <taxon>Pseudomonadati</taxon>
        <taxon>Pseudomonadota</taxon>
        <taxon>Gammaproteobacteria</taxon>
        <taxon>Vibrionales</taxon>
        <taxon>Vibrionaceae</taxon>
        <taxon>Vibrio</taxon>
    </lineage>
</organism>
<comment type="function">
    <text evidence="1">NQR complex catalyzes the reduction of ubiquinone-1 to ubiquinol by two successive reactions, coupled with the transport of Na(+) ions from the cytoplasm to the periplasm. The first step is catalyzed by NqrF, which accepts electrons from NADH and reduces ubiquinone-1 to ubisemiquinone by a one-electron transfer pathway.</text>
</comment>
<comment type="catalytic activity">
    <reaction evidence="1">
        <text>a ubiquinone + n Na(+)(in) + NADH + H(+) = a ubiquinol + n Na(+)(out) + NAD(+)</text>
        <dbReference type="Rhea" id="RHEA:47748"/>
        <dbReference type="Rhea" id="RHEA-COMP:9565"/>
        <dbReference type="Rhea" id="RHEA-COMP:9566"/>
        <dbReference type="ChEBI" id="CHEBI:15378"/>
        <dbReference type="ChEBI" id="CHEBI:16389"/>
        <dbReference type="ChEBI" id="CHEBI:17976"/>
        <dbReference type="ChEBI" id="CHEBI:29101"/>
        <dbReference type="ChEBI" id="CHEBI:57540"/>
        <dbReference type="ChEBI" id="CHEBI:57945"/>
        <dbReference type="EC" id="7.2.1.1"/>
    </reaction>
</comment>
<comment type="cofactor">
    <cofactor evidence="1">
        <name>[2Fe-2S] cluster</name>
        <dbReference type="ChEBI" id="CHEBI:190135"/>
    </cofactor>
    <text evidence="1">Binds 1 [2Fe-2S] cluster.</text>
</comment>
<comment type="cofactor">
    <cofactor evidence="1">
        <name>FAD</name>
        <dbReference type="ChEBI" id="CHEBI:57692"/>
    </cofactor>
</comment>
<comment type="subunit">
    <text evidence="1">Composed of six subunits; NqrA, NqrB, NqrC, NqrD, NqrE and NqrF.</text>
</comment>
<comment type="subcellular location">
    <subcellularLocation>
        <location evidence="1">Cell inner membrane</location>
        <topology evidence="1">Single-pass membrane protein</topology>
    </subcellularLocation>
</comment>
<comment type="similarity">
    <text evidence="1">Belongs to the NqrF family.</text>
</comment>
<evidence type="ECO:0000255" key="1">
    <source>
        <dbReference type="HAMAP-Rule" id="MF_00430"/>
    </source>
</evidence>